<feature type="propeptide" id="PRO_0000450400" description="Cleaved by FlvT" evidence="5">
    <location>
        <begin position="1"/>
        <end position="33"/>
    </location>
</feature>
<feature type="peptide" id="PRO_0000450401" description="Lantibiotic Flvbeta.c" evidence="5">
    <location>
        <begin position="34"/>
        <end position="71"/>
    </location>
</feature>
<feature type="modified residue" description="2,3-didehydroalanine (Ser); by FlvM2" evidence="5">
    <location>
        <position position="36"/>
    </location>
</feature>
<feature type="cross-link" description="Lanthionine (Ser-Cys); by FlvM2" evidence="5">
    <location>
        <begin position="35"/>
        <end position="39"/>
    </location>
</feature>
<feature type="cross-link" description="Beta-methyllanthionine (Thr-Cys); by FlvM2" evidence="5">
    <location>
        <begin position="54"/>
        <end position="60"/>
    </location>
</feature>
<feature type="cross-link" description="Beta-methyllanthionine (Thr-Cys); by FlvM2" evidence="5">
    <location>
        <begin position="62"/>
        <end position="65"/>
    </location>
</feature>
<feature type="cross-link" description="Beta-methyllanthionine (Thr-Cys); by FlvM2" evidence="5">
    <location>
        <begin position="66"/>
        <end position="69"/>
    </location>
</feature>
<evidence type="ECO:0000250" key="1">
    <source>
        <dbReference type="UniProtKB" id="P86475"/>
    </source>
</evidence>
<evidence type="ECO:0000269" key="2">
    <source>
    </source>
</evidence>
<evidence type="ECO:0000303" key="3">
    <source>
    </source>
</evidence>
<evidence type="ECO:0000305" key="4"/>
<evidence type="ECO:0000305" key="5">
    <source>
    </source>
</evidence>
<protein>
    <recommendedName>
        <fullName evidence="3">Lantibiotic Flvbeta.c</fullName>
    </recommendedName>
</protein>
<sequence length="71" mass="7656">MENKFDMEKFKKLAAVVSEDELDTLLDETTVGAGSSNDCADLILKITGVVVSATSKFDWCPTGACTTSCRF</sequence>
<reference key="1">
    <citation type="journal article" date="2016" name="Cell Chem. Biol.">
        <title>Structural characterization and bioactivity analysis of the two-component lantibiotic Flv system from a ruminant bacterium.</title>
        <authorList>
            <person name="Zhao X."/>
            <person name="van der Donk W.A."/>
        </authorList>
    </citation>
    <scope>NUCLEOTIDE SEQUENCE [GENOMIC DNA]</scope>
    <scope>EXPRESSION IN E.COLI</scope>
    <scope>DEHYDRATION AT SER-36</scope>
    <scope>LANTHIONINE AND METHYLLANTHIONINE CROSS-LINKS</scope>
    <source>
        <strain>FD-1</strain>
    </source>
</reference>
<name>LAN2C_RUMFL</name>
<dbReference type="GO" id="GO:0005576">
    <property type="term" value="C:extracellular region"/>
    <property type="evidence" value="ECO:0007669"/>
    <property type="project" value="UniProtKB-SubCell"/>
</dbReference>
<dbReference type="GO" id="GO:0005102">
    <property type="term" value="F:signaling receptor binding"/>
    <property type="evidence" value="ECO:0007669"/>
    <property type="project" value="UniProtKB-KW"/>
</dbReference>
<dbReference type="GO" id="GO:0042742">
    <property type="term" value="P:defense response to bacterium"/>
    <property type="evidence" value="ECO:0007669"/>
    <property type="project" value="UniProtKB-KW"/>
</dbReference>
<dbReference type="GO" id="GO:0031640">
    <property type="term" value="P:killing of cells of another organism"/>
    <property type="evidence" value="ECO:0007669"/>
    <property type="project" value="UniProtKB-KW"/>
</dbReference>
<dbReference type="NCBIfam" id="NF038161">
    <property type="entry name" value="lant_II_LchA2"/>
    <property type="match status" value="1"/>
</dbReference>
<organism>
    <name type="scientific">Ruminococcus flavefaciens</name>
    <dbReference type="NCBI Taxonomy" id="1265"/>
    <lineage>
        <taxon>Bacteria</taxon>
        <taxon>Bacillati</taxon>
        <taxon>Bacillota</taxon>
        <taxon>Clostridia</taxon>
        <taxon>Eubacteriales</taxon>
        <taxon>Oscillospiraceae</taxon>
        <taxon>Ruminococcus</taxon>
    </lineage>
</organism>
<accession>P0DQL5</accession>
<keyword id="KW-0044">Antibiotic</keyword>
<keyword id="KW-0929">Antimicrobial</keyword>
<keyword id="KW-0078">Bacteriocin</keyword>
<keyword id="KW-0425">Lantibiotic</keyword>
<keyword id="KW-0964">Secreted</keyword>
<keyword id="KW-0883">Thioether bond</keyword>
<proteinExistence type="inferred from homology"/>
<comment type="function">
    <text evidence="1 2">Lanthionine-containing peptide antibiotic (lantibiotic) that is probably active on Gram-positive bacteria, since its analog [Del1]Flvbeta.c shows antibacterial activity against M.luteus (PubMed:27028884). This activity is not synergistically enhanced by [Del2]Flvalpha.a, an analog of Flvalpha.a, which is encoded by the same operon than Flvbeta.c (PubMed:27028884). The bactericidal activity of lantibiotics is based on depolarization of energized bacterial cytoplasmic membranes, initiated by the formation of aqueous transmembrane pores (By similarity).</text>
</comment>
<comment type="subcellular location">
    <subcellularLocation>
        <location evidence="4">Secreted</location>
    </subcellularLocation>
</comment>
<comment type="PTM">
    <text evidence="2">Contains LL-lanthionine and DL-beta-methyllanthionine, when coepressed in E.coli with the flavecin synthetase FlvM2.</text>
</comment>
<gene>
    <name evidence="3" type="primary">FlvA2.c</name>
</gene>